<organism>
    <name type="scientific">Prosthecochloris aestuarii (strain DSM 271 / SK 413)</name>
    <dbReference type="NCBI Taxonomy" id="290512"/>
    <lineage>
        <taxon>Bacteria</taxon>
        <taxon>Pseudomonadati</taxon>
        <taxon>Chlorobiota</taxon>
        <taxon>Chlorobiia</taxon>
        <taxon>Chlorobiales</taxon>
        <taxon>Chlorobiaceae</taxon>
        <taxon>Prosthecochloris</taxon>
    </lineage>
</organism>
<sequence>MSKKASMHKEEKHEKGQHKQPADEQPLGIDPEVSSGEASEGACQESDAKVQELEKALEEAQQQAEKYRGEMMRFAADFENFRKQKERELQAAGTRSIENTIRELLPLVDDMKRVMEHAPDDLEQSGEARPYLEGVELLWKNLLKWFERKGVKQIEACGQKLDVNFHEAITQVDHPDAEPDTVIEEYQTGYVMGDKVLRHAKVIVAR</sequence>
<feature type="chain" id="PRO_1000137595" description="Protein GrpE">
    <location>
        <begin position="1"/>
        <end position="206"/>
    </location>
</feature>
<feature type="region of interest" description="Disordered" evidence="2">
    <location>
        <begin position="1"/>
        <end position="64"/>
    </location>
</feature>
<feature type="compositionally biased region" description="Basic and acidic residues" evidence="2">
    <location>
        <begin position="46"/>
        <end position="58"/>
    </location>
</feature>
<evidence type="ECO:0000255" key="1">
    <source>
        <dbReference type="HAMAP-Rule" id="MF_01151"/>
    </source>
</evidence>
<evidence type="ECO:0000256" key="2">
    <source>
        <dbReference type="SAM" id="MobiDB-lite"/>
    </source>
</evidence>
<proteinExistence type="inferred from homology"/>
<keyword id="KW-0143">Chaperone</keyword>
<keyword id="KW-0963">Cytoplasm</keyword>
<keyword id="KW-0346">Stress response</keyword>
<comment type="function">
    <text evidence="1">Participates actively in the response to hyperosmotic and heat shock by preventing the aggregation of stress-denatured proteins, in association with DnaK and GrpE. It is the nucleotide exchange factor for DnaK and may function as a thermosensor. Unfolded proteins bind initially to DnaJ; upon interaction with the DnaJ-bound protein, DnaK hydrolyzes its bound ATP, resulting in the formation of a stable complex. GrpE releases ADP from DnaK; ATP binding to DnaK triggers the release of the substrate protein, thus completing the reaction cycle. Several rounds of ATP-dependent interactions between DnaJ, DnaK and GrpE are required for fully efficient folding.</text>
</comment>
<comment type="subunit">
    <text evidence="1">Homodimer.</text>
</comment>
<comment type="subcellular location">
    <subcellularLocation>
        <location evidence="1">Cytoplasm</location>
    </subcellularLocation>
</comment>
<comment type="similarity">
    <text evidence="1">Belongs to the GrpE family.</text>
</comment>
<reference key="1">
    <citation type="submission" date="2008-06" db="EMBL/GenBank/DDBJ databases">
        <title>Complete sequence of chromosome of Prosthecochloris aestuarii DSM 271.</title>
        <authorList>
            <consortium name="US DOE Joint Genome Institute"/>
            <person name="Lucas S."/>
            <person name="Copeland A."/>
            <person name="Lapidus A."/>
            <person name="Glavina del Rio T."/>
            <person name="Dalin E."/>
            <person name="Tice H."/>
            <person name="Bruce D."/>
            <person name="Goodwin L."/>
            <person name="Pitluck S."/>
            <person name="Schmutz J."/>
            <person name="Larimer F."/>
            <person name="Land M."/>
            <person name="Hauser L."/>
            <person name="Kyrpides N."/>
            <person name="Anderson I."/>
            <person name="Liu Z."/>
            <person name="Li T."/>
            <person name="Zhao F."/>
            <person name="Overmann J."/>
            <person name="Bryant D.A."/>
            <person name="Richardson P."/>
        </authorList>
    </citation>
    <scope>NUCLEOTIDE SEQUENCE [LARGE SCALE GENOMIC DNA]</scope>
    <source>
        <strain>DSM 271 / SK 413</strain>
    </source>
</reference>
<gene>
    <name evidence="1" type="primary">grpE</name>
    <name type="ordered locus">Paes_1583</name>
</gene>
<dbReference type="EMBL" id="CP001108">
    <property type="protein sequence ID" value="ACF46601.1"/>
    <property type="molecule type" value="Genomic_DNA"/>
</dbReference>
<dbReference type="RefSeq" id="WP_012506134.1">
    <property type="nucleotide sequence ID" value="NC_011059.1"/>
</dbReference>
<dbReference type="SMR" id="B4S9D1"/>
<dbReference type="STRING" id="290512.Paes_1583"/>
<dbReference type="KEGG" id="paa:Paes_1583"/>
<dbReference type="eggNOG" id="COG0576">
    <property type="taxonomic scope" value="Bacteria"/>
</dbReference>
<dbReference type="HOGENOM" id="CLU_057217_5_2_10"/>
<dbReference type="Proteomes" id="UP000002725">
    <property type="component" value="Chromosome"/>
</dbReference>
<dbReference type="GO" id="GO:0005737">
    <property type="term" value="C:cytoplasm"/>
    <property type="evidence" value="ECO:0007669"/>
    <property type="project" value="UniProtKB-SubCell"/>
</dbReference>
<dbReference type="GO" id="GO:0000774">
    <property type="term" value="F:adenyl-nucleotide exchange factor activity"/>
    <property type="evidence" value="ECO:0007669"/>
    <property type="project" value="InterPro"/>
</dbReference>
<dbReference type="GO" id="GO:0042803">
    <property type="term" value="F:protein homodimerization activity"/>
    <property type="evidence" value="ECO:0007669"/>
    <property type="project" value="InterPro"/>
</dbReference>
<dbReference type="GO" id="GO:0051087">
    <property type="term" value="F:protein-folding chaperone binding"/>
    <property type="evidence" value="ECO:0007669"/>
    <property type="project" value="InterPro"/>
</dbReference>
<dbReference type="GO" id="GO:0051082">
    <property type="term" value="F:unfolded protein binding"/>
    <property type="evidence" value="ECO:0007669"/>
    <property type="project" value="TreeGrafter"/>
</dbReference>
<dbReference type="GO" id="GO:0006457">
    <property type="term" value="P:protein folding"/>
    <property type="evidence" value="ECO:0007669"/>
    <property type="project" value="InterPro"/>
</dbReference>
<dbReference type="CDD" id="cd00446">
    <property type="entry name" value="GrpE"/>
    <property type="match status" value="1"/>
</dbReference>
<dbReference type="FunFam" id="2.30.22.10:FF:000001">
    <property type="entry name" value="Protein GrpE"/>
    <property type="match status" value="1"/>
</dbReference>
<dbReference type="Gene3D" id="3.90.20.20">
    <property type="match status" value="1"/>
</dbReference>
<dbReference type="Gene3D" id="2.30.22.10">
    <property type="entry name" value="Head domain of nucleotide exchange factor GrpE"/>
    <property type="match status" value="1"/>
</dbReference>
<dbReference type="HAMAP" id="MF_01151">
    <property type="entry name" value="GrpE"/>
    <property type="match status" value="1"/>
</dbReference>
<dbReference type="InterPro" id="IPR000740">
    <property type="entry name" value="GrpE"/>
</dbReference>
<dbReference type="InterPro" id="IPR013805">
    <property type="entry name" value="GrpE_coiled_coil"/>
</dbReference>
<dbReference type="InterPro" id="IPR009012">
    <property type="entry name" value="GrpE_head"/>
</dbReference>
<dbReference type="PANTHER" id="PTHR21237">
    <property type="entry name" value="GRPE PROTEIN"/>
    <property type="match status" value="1"/>
</dbReference>
<dbReference type="PANTHER" id="PTHR21237:SF23">
    <property type="entry name" value="GRPE PROTEIN HOMOLOG, MITOCHONDRIAL"/>
    <property type="match status" value="1"/>
</dbReference>
<dbReference type="Pfam" id="PF01025">
    <property type="entry name" value="GrpE"/>
    <property type="match status" value="1"/>
</dbReference>
<dbReference type="PRINTS" id="PR00773">
    <property type="entry name" value="GRPEPROTEIN"/>
</dbReference>
<dbReference type="SUPFAM" id="SSF58014">
    <property type="entry name" value="Coiled-coil domain of nucleotide exchange factor GrpE"/>
    <property type="match status" value="1"/>
</dbReference>
<dbReference type="SUPFAM" id="SSF51064">
    <property type="entry name" value="Head domain of nucleotide exchange factor GrpE"/>
    <property type="match status" value="1"/>
</dbReference>
<dbReference type="PROSITE" id="PS01071">
    <property type="entry name" value="GRPE"/>
    <property type="match status" value="1"/>
</dbReference>
<accession>B4S9D1</accession>
<protein>
    <recommendedName>
        <fullName evidence="1">Protein GrpE</fullName>
    </recommendedName>
    <alternativeName>
        <fullName evidence="1">HSP-70 cofactor</fullName>
    </alternativeName>
</protein>
<name>GRPE_PROA2</name>